<accession>Q07863</accession>
<comment type="function">
    <text evidence="1">Minor protein of the capsid that localizes along the inner surface of the virion, within the central cavities beneath the L1 pentamers. Plays a role in capsid stabilization through interaction with the major capsid protein L1. Once the virion enters the host cell, L2 escorts the genomic DNA into the nucleus by promoting escape from the endosomal compartments and traffic through the host Golgi network. Mechanistically, the C-terminus of L2 possesses a cell-penetrating peptide that protudes from the host endosome, interacts with host cytoplasmic retromer cargo and thereby mediates the capsid delivery to the host trans-Golgi network. Plays a role through its interaction with host dynein in the intracellular microtubule-dependent transport of viral capsid toward the nucleus. Mediates the viral genome import into the nucleus through binding to host importins. Once within the nucleus, L2 localizes viral genomes to host PML bodies in order to activate early gene expression for establishment of infection. Later on, promotes late gene expression by interacting with the viral E2 protein and by inhibiting its transcriptional activation functions. During virion assembly, encapsidates the genome by direct interaction with the viral DNA.</text>
</comment>
<comment type="subunit">
    <text evidence="1">Interacts with major capsid protein L1. Interacts with E2; this interaction inhibits E2 transcriptional activity but not the DNA replication function E2. Interacts with host GADD45GIP1. Interacts with host HSPA8; this interaction is required for L2 nuclear translocation. Interacts with host importins KPNB2 and KPNB3. Forms a complex with importin alpha2-beta1 heterodimers via interaction with the importin alpha2 adapter. Interacts with host DYNLT1; this interaction is essential for virus intracellular transport during entry. Interacts (via C-terminus) with host retromer subunits VPS35 and VPS29.</text>
</comment>
<comment type="subcellular location">
    <subcellularLocation>
        <location evidence="1">Virion</location>
    </subcellularLocation>
    <subcellularLocation>
        <location evidence="1">Host nucleus</location>
    </subcellularLocation>
    <subcellularLocation>
        <location evidence="1">Host early endosome</location>
    </subcellularLocation>
    <subcellularLocation>
        <location evidence="1">Host Golgi apparatus</location>
    </subcellularLocation>
</comment>
<comment type="PTM">
    <text evidence="1">Highly phosphorylated.</text>
</comment>
<comment type="similarity">
    <text evidence="1">Belongs to the papillomaviridae L2 protein family.</text>
</comment>
<sequence length="504" mass="54826">MLRVRKRRAAPQDIYPACKVANNCPPDIQNKIEQTTVADKILQYGSLGIFLGGLGIGTGKGGGGRYGYTPLGDSGAVRVGGRSTPVRPTVPVETVGPRDILPIDSLDPLGPSVIELEDIPATTVEVVAEVHPISDTPQIPAPTTDESSSAVLHIPQESPAARTITRSQYNNPLFRITASADIASGEASASDNIFIDVDTPGQIVGQEIPLVNFDMGPISTEGELETEFTTSTPRTTQVQERPTRFYNRRYYEQVPVTAPEFITRPASLVTFENPAFERSVSLIFEQDLEDILNAPDQDFRDIVYLSRPTYSRAPDGRMRLSRLGRRATISTRSGVTIGAQSHFYMDISSISSNDGIELQTLGEASGETVVQSSLAASDPIEAEHSFIEPAPSIDSYDIVSLQSETYSDEHLLDMYEPVGSSLQLQISDVRGRPTVIDIPFRPRRPPLGPINAGVDIYSPTASVGSPTINPTDLDIPLIIIHLDNSTGDYDLHPSLRKRRKLVHI</sequence>
<protein>
    <recommendedName>
        <fullName evidence="1">Minor capsid protein L2</fullName>
    </recommendedName>
</protein>
<gene>
    <name evidence="1" type="primary">L2</name>
</gene>
<evidence type="ECO:0000255" key="1">
    <source>
        <dbReference type="HAMAP-Rule" id="MF_04003"/>
    </source>
</evidence>
<name>VL2_HPV63</name>
<dbReference type="EMBL" id="X70828">
    <property type="protein sequence ID" value="CAA50169.1"/>
    <property type="molecule type" value="Genomic_DNA"/>
</dbReference>
<dbReference type="RefSeq" id="NP_040901.1">
    <property type="nucleotide sequence ID" value="NC_001458.1"/>
</dbReference>
<dbReference type="KEGG" id="vg:1494576"/>
<dbReference type="OrthoDB" id="8047at10239"/>
<dbReference type="Proteomes" id="UP000007671">
    <property type="component" value="Segment"/>
</dbReference>
<dbReference type="GO" id="GO:0043657">
    <property type="term" value="C:host cell"/>
    <property type="evidence" value="ECO:0007669"/>
    <property type="project" value="GOC"/>
</dbReference>
<dbReference type="GO" id="GO:0044174">
    <property type="term" value="C:host cell endosome"/>
    <property type="evidence" value="ECO:0007669"/>
    <property type="project" value="UniProtKB-KW"/>
</dbReference>
<dbReference type="GO" id="GO:0044177">
    <property type="term" value="C:host cell Golgi apparatus"/>
    <property type="evidence" value="ECO:0007669"/>
    <property type="project" value="UniProtKB-SubCell"/>
</dbReference>
<dbReference type="GO" id="GO:0042025">
    <property type="term" value="C:host cell nucleus"/>
    <property type="evidence" value="ECO:0007669"/>
    <property type="project" value="UniProtKB-SubCell"/>
</dbReference>
<dbReference type="GO" id="GO:0019028">
    <property type="term" value="C:viral capsid"/>
    <property type="evidence" value="ECO:0007669"/>
    <property type="project" value="UniProtKB-UniRule"/>
</dbReference>
<dbReference type="GO" id="GO:0003677">
    <property type="term" value="F:DNA binding"/>
    <property type="evidence" value="ECO:0007669"/>
    <property type="project" value="UniProtKB-UniRule"/>
</dbReference>
<dbReference type="GO" id="GO:0005198">
    <property type="term" value="F:structural molecule activity"/>
    <property type="evidence" value="ECO:0007669"/>
    <property type="project" value="UniProtKB-UniRule"/>
</dbReference>
<dbReference type="GO" id="GO:0075521">
    <property type="term" value="P:microtubule-dependent intracellular transport of viral material towards nucleus"/>
    <property type="evidence" value="ECO:0007669"/>
    <property type="project" value="UniProtKB-UniRule"/>
</dbReference>
<dbReference type="GO" id="GO:0046718">
    <property type="term" value="P:symbiont entry into host cell"/>
    <property type="evidence" value="ECO:0007669"/>
    <property type="project" value="UniProtKB-KW"/>
</dbReference>
<dbReference type="GO" id="GO:0075732">
    <property type="term" value="P:viral penetration into host nucleus"/>
    <property type="evidence" value="ECO:0007669"/>
    <property type="project" value="UniProtKB-KW"/>
</dbReference>
<dbReference type="HAMAP" id="MF_04003">
    <property type="entry name" value="PPV_L2"/>
    <property type="match status" value="1"/>
</dbReference>
<dbReference type="InterPro" id="IPR000784">
    <property type="entry name" value="Late_L2"/>
</dbReference>
<dbReference type="Pfam" id="PF00513">
    <property type="entry name" value="Late_protein_L2"/>
    <property type="match status" value="1"/>
</dbReference>
<proteinExistence type="inferred from homology"/>
<keyword id="KW-0167">Capsid protein</keyword>
<keyword id="KW-1176">Cytoplasmic inwards viral transport</keyword>
<keyword id="KW-1015">Disulfide bond</keyword>
<keyword id="KW-0238">DNA-binding</keyword>
<keyword id="KW-1039">Host endosome</keyword>
<keyword id="KW-1040">Host Golgi apparatus</keyword>
<keyword id="KW-1048">Host nucleus</keyword>
<keyword id="KW-0945">Host-virus interaction</keyword>
<keyword id="KW-0426">Late protein</keyword>
<keyword id="KW-1177">Microtubular inwards viral transport</keyword>
<keyword id="KW-0597">Phosphoprotein</keyword>
<keyword id="KW-1185">Reference proteome</keyword>
<keyword id="KW-1163">Viral penetration into host nucleus</keyword>
<keyword id="KW-0946">Virion</keyword>
<keyword id="KW-1160">Virus entry into host cell</keyword>
<organismHost>
    <name type="scientific">Homo sapiens</name>
    <name type="common">Human</name>
    <dbReference type="NCBI Taxonomy" id="9606"/>
</organismHost>
<reference key="1">
    <citation type="journal article" date="1993" name="Virology">
        <title>Two novel types of human papillomavirus, HPV 63 and HPV 65: comparisons of their clinical and histological features and DNA sequences to other HPV types.</title>
        <authorList>
            <person name="Egawa K."/>
            <person name="Delius H."/>
            <person name="Matsukura T."/>
            <person name="Kawashima M."/>
            <person name="de Villiers E.M."/>
        </authorList>
    </citation>
    <scope>NUCLEOTIDE SEQUENCE [GENOMIC DNA]</scope>
</reference>
<feature type="chain" id="PRO_0000133628" description="Minor capsid protein L2">
    <location>
        <begin position="1"/>
        <end position="504"/>
    </location>
</feature>
<feature type="short sequence motif" description="Nuclear localization signal" evidence="1">
    <location>
        <begin position="1"/>
        <end position="9"/>
    </location>
</feature>
<feature type="short sequence motif" description="Nuclear localization signal" evidence="1">
    <location>
        <begin position="497"/>
        <end position="504"/>
    </location>
</feature>
<feature type="disulfide bond" evidence="1">
    <location>
        <begin position="18"/>
        <end position="24"/>
    </location>
</feature>
<organism>
    <name type="scientific">Human papillomavirus type 63</name>
    <dbReference type="NCBI Taxonomy" id="28311"/>
    <lineage>
        <taxon>Viruses</taxon>
        <taxon>Monodnaviria</taxon>
        <taxon>Shotokuvirae</taxon>
        <taxon>Cossaviricota</taxon>
        <taxon>Papovaviricetes</taxon>
        <taxon>Zurhausenvirales</taxon>
        <taxon>Papillomaviridae</taxon>
        <taxon>Firstpapillomavirinae</taxon>
        <taxon>Mupapillomavirus</taxon>
        <taxon>Mupapillomavirus 2</taxon>
    </lineage>
</organism>